<reference key="1">
    <citation type="journal article" date="1998" name="Nature">
        <title>The complete genome of the hyperthermophilic bacterium Aquifex aeolicus.</title>
        <authorList>
            <person name="Deckert G."/>
            <person name="Warren P.V."/>
            <person name="Gaasterland T."/>
            <person name="Young W.G."/>
            <person name="Lenox A.L."/>
            <person name="Graham D.E."/>
            <person name="Overbeek R."/>
            <person name="Snead M.A."/>
            <person name="Keller M."/>
            <person name="Aujay M."/>
            <person name="Huber R."/>
            <person name="Feldman R.A."/>
            <person name="Short J.M."/>
            <person name="Olsen G.J."/>
            <person name="Swanson R.V."/>
        </authorList>
    </citation>
    <scope>NUCLEOTIDE SEQUENCE [LARGE SCALE GENOMIC DNA]</scope>
    <source>
        <strain>VF5</strain>
    </source>
</reference>
<reference key="2">
    <citation type="journal article" date="2018" name="Nat. Struct. Mol. Biol.">
        <title>GlcNAc-1-P-transferase-tunicamycin complex structure reveals basis for inhibition of N-glycosylation.</title>
        <authorList>
            <person name="Yoo J."/>
            <person name="Mashalidis E.H."/>
            <person name="Kuk A.C.Y."/>
            <person name="Yamamoto K."/>
            <person name="Kaeser B."/>
            <person name="Ichikawa S."/>
            <person name="Lee S.Y."/>
        </authorList>
    </citation>
    <scope>FUNCTION</scope>
    <scope>ACTIVITY REGULATION</scope>
    <scope>COFACTOR</scope>
    <scope>CATALYTIC ACTIVITY</scope>
    <scope>MUTAGENESIS OF ASP-265</scope>
</reference>
<reference evidence="5" key="3">
    <citation type="journal article" date="2013" name="Science">
        <title>Crystal structure of MraY, an essential membrane enzyme for bacterial cell wall synthesis.</title>
        <authorList>
            <person name="Chung B.C."/>
            <person name="Zhao J."/>
            <person name="Gillespie R.A."/>
            <person name="Kwon D.Y."/>
            <person name="Guan Z."/>
            <person name="Hong J."/>
            <person name="Zhou P."/>
            <person name="Lee S.Y."/>
        </authorList>
    </citation>
    <scope>X-RAY CRYSTALLOGRAPHY (3.30 ANGSTROMS)</scope>
    <scope>FUNCTION</scope>
    <scope>SUBUNIT</scope>
    <scope>TOPOLOGY</scope>
    <scope>ACTIVITY REGULATION</scope>
    <scope>MUTAGENESIS OF ASP-117; ASP-118; ASP-265; HIS-324; HIS-325 AND HIS-326</scope>
    <scope>COFACTOR</scope>
    <scope>CATALYTIC ACTIVITY</scope>
</reference>
<reference evidence="6" key="4">
    <citation type="journal article" date="2016" name="Nature">
        <title>Structural insights into inhibition of lipid I production in bacterial cell wall synthesis.</title>
        <authorList>
            <person name="Chung B.C."/>
            <person name="Mashalidis E.H."/>
            <person name="Tanino T."/>
            <person name="Kim M."/>
            <person name="Matsuda A."/>
            <person name="Hong J."/>
            <person name="Ichikawa S."/>
            <person name="Lee S.Y."/>
        </authorList>
    </citation>
    <scope>X-RAY CRYSTALLOGRAPHY (2.95 ANGSTROMS) IN COMPLEX WITH MURAYMYCIN D2 INHIBITOR</scope>
    <scope>FUNCTION</scope>
    <scope>COFACTOR</scope>
    <scope>CATALYTIC ACTIVITY</scope>
    <scope>ACTIVITY REGULATION</scope>
    <scope>BIOPHYSICOCHEMICAL PROPERTIES</scope>
    <scope>MUTAGENESIS OF LYS-70; ASN-190; ASP-193; ASP-196; PHE-262 AND GLN-305</scope>
</reference>
<protein>
    <recommendedName>
        <fullName evidence="1">Phospho-N-acetylmuramoyl-pentapeptide-transferase</fullName>
        <ecNumber evidence="1 2 3 4">2.7.8.13</ecNumber>
    </recommendedName>
    <alternativeName>
        <fullName evidence="1">UDP-MurNAc-pentapeptide phosphotransferase</fullName>
    </alternativeName>
</protein>
<keyword id="KW-0002">3D-structure</keyword>
<keyword id="KW-0131">Cell cycle</keyword>
<keyword id="KW-0132">Cell division</keyword>
<keyword id="KW-0997">Cell inner membrane</keyword>
<keyword id="KW-1003">Cell membrane</keyword>
<keyword id="KW-0133">Cell shape</keyword>
<keyword id="KW-0961">Cell wall biogenesis/degradation</keyword>
<keyword id="KW-0460">Magnesium</keyword>
<keyword id="KW-0464">Manganese</keyword>
<keyword id="KW-0472">Membrane</keyword>
<keyword id="KW-0479">Metal-binding</keyword>
<keyword id="KW-0573">Peptidoglycan synthesis</keyword>
<keyword id="KW-1185">Reference proteome</keyword>
<keyword id="KW-0808">Transferase</keyword>
<keyword id="KW-0812">Transmembrane</keyword>
<keyword id="KW-1133">Transmembrane helix</keyword>
<gene>
    <name evidence="1" type="primary">mraY</name>
    <name type="ordered locus">aq_053</name>
</gene>
<organism>
    <name type="scientific">Aquifex aeolicus (strain VF5)</name>
    <dbReference type="NCBI Taxonomy" id="224324"/>
    <lineage>
        <taxon>Bacteria</taxon>
        <taxon>Pseudomonadati</taxon>
        <taxon>Aquificota</taxon>
        <taxon>Aquificia</taxon>
        <taxon>Aquificales</taxon>
        <taxon>Aquificaceae</taxon>
        <taxon>Aquifex</taxon>
    </lineage>
</organism>
<feature type="chain" id="PRO_0000108772" description="Phospho-N-acetylmuramoyl-pentapeptide-transferase">
    <location>
        <begin position="1"/>
        <end position="359"/>
    </location>
</feature>
<feature type="topological domain" description="Periplasmic" evidence="2">
    <location>
        <begin position="1"/>
        <end position="25"/>
    </location>
</feature>
<feature type="transmembrane region" description="Helical; Name=Helix 1" evidence="2">
    <location>
        <begin position="26"/>
        <end position="48"/>
    </location>
</feature>
<feature type="topological domain" description="Cytoplasmic" evidence="2">
    <location>
        <begin position="49"/>
        <end position="74"/>
    </location>
</feature>
<feature type="transmembrane region" description="Helical; Name=Helix 2" evidence="2">
    <location>
        <begin position="75"/>
        <end position="92"/>
    </location>
</feature>
<feature type="topological domain" description="Periplasmic" evidence="2">
    <location>
        <begin position="93"/>
        <end position="98"/>
    </location>
</feature>
<feature type="transmembrane region" description="Helical; Name=Helix 3" evidence="2">
    <location>
        <begin position="99"/>
        <end position="120"/>
    </location>
</feature>
<feature type="topological domain" description="Cytoplasmic" evidence="2">
    <location>
        <begin position="121"/>
        <end position="130"/>
    </location>
</feature>
<feature type="transmembrane region" description="Helical; Name=Helix 4" evidence="2">
    <location>
        <begin position="131"/>
        <end position="152"/>
    </location>
</feature>
<feature type="topological domain" description="Periplasmic" evidence="2">
    <location>
        <begin position="153"/>
        <end position="172"/>
    </location>
</feature>
<feature type="transmembrane region" description="Helical; Name=Helix 5" evidence="2">
    <location>
        <begin position="173"/>
        <end position="194"/>
    </location>
</feature>
<feature type="topological domain" description="Cytoplasmic" evidence="2">
    <location>
        <begin position="195"/>
        <end position="197"/>
    </location>
</feature>
<feature type="transmembrane region" description="Helical; Name=Helix 6" evidence="2">
    <location>
        <begin position="198"/>
        <end position="218"/>
    </location>
</feature>
<feature type="topological domain" description="Periplasmic" evidence="2">
    <location>
        <begin position="219"/>
        <end position="233"/>
    </location>
</feature>
<feature type="transmembrane region" description="Helical; Name=Helix 7" evidence="2">
    <location>
        <begin position="234"/>
        <end position="255"/>
    </location>
</feature>
<feature type="topological domain" description="Cytoplasmic" evidence="2">
    <location>
        <begin position="256"/>
        <end position="264"/>
    </location>
</feature>
<feature type="transmembrane region" description="Helical; Name=Helix 8" evidence="2">
    <location>
        <begin position="265"/>
        <end position="280"/>
    </location>
</feature>
<feature type="topological domain" description="Periplasmic" evidence="2">
    <location>
        <begin position="281"/>
        <end position="284"/>
    </location>
</feature>
<feature type="transmembrane region" description="Helical; Name=Helix 9" evidence="2">
    <location>
        <begin position="285"/>
        <end position="310"/>
    </location>
</feature>
<feature type="topological domain" description="Cytoplasmic" evidence="2">
    <location>
        <begin position="311"/>
        <end position="332"/>
    </location>
</feature>
<feature type="transmembrane region" description="Helical; Name=Helix 10" evidence="2">
    <location>
        <begin position="333"/>
        <end position="355"/>
    </location>
</feature>
<feature type="topological domain" description="Periplasmic" evidence="2">
    <location>
        <begin position="356"/>
        <end position="359"/>
    </location>
</feature>
<feature type="binding site" evidence="3 6">
    <location>
        <position position="70"/>
    </location>
    <ligand>
        <name>muraymycin D2</name>
        <dbReference type="ChEBI" id="CHEBI:178053"/>
        <note>inhibitor</note>
    </ligand>
</feature>
<feature type="binding site" evidence="3 6">
    <location>
        <position position="75"/>
    </location>
    <ligand>
        <name>muraymycin D2</name>
        <dbReference type="ChEBI" id="CHEBI:178053"/>
        <note>inhibitor</note>
    </ligand>
</feature>
<feature type="binding site" evidence="3 6">
    <location>
        <position position="190"/>
    </location>
    <ligand>
        <name>muraymycin D2</name>
        <dbReference type="ChEBI" id="CHEBI:178053"/>
        <note>inhibitor</note>
    </ligand>
</feature>
<feature type="binding site" evidence="3 6">
    <location>
        <position position="193"/>
    </location>
    <ligand>
        <name>muraymycin D2</name>
        <dbReference type="ChEBI" id="CHEBI:178053"/>
        <note>inhibitor</note>
    </ligand>
</feature>
<feature type="binding site" evidence="3 6">
    <location>
        <position position="196"/>
    </location>
    <ligand>
        <name>muraymycin D2</name>
        <dbReference type="ChEBI" id="CHEBI:178053"/>
        <note>inhibitor</note>
    </ligand>
</feature>
<feature type="binding site" evidence="3 6">
    <location>
        <position position="264"/>
    </location>
    <ligand>
        <name>muraymycin D2</name>
        <dbReference type="ChEBI" id="CHEBI:178053"/>
        <note>inhibitor</note>
    </ligand>
</feature>
<feature type="binding site" evidence="3 6">
    <location>
        <position position="268"/>
    </location>
    <ligand>
        <name>muraymycin D2</name>
        <dbReference type="ChEBI" id="CHEBI:178053"/>
        <note>inhibitor</note>
    </ligand>
</feature>
<feature type="binding site" evidence="3 6">
    <location>
        <position position="305"/>
    </location>
    <ligand>
        <name>muraymycin D2</name>
        <dbReference type="ChEBI" id="CHEBI:178053"/>
        <note>inhibitor</note>
    </ligand>
</feature>
<feature type="binding site" evidence="3 6">
    <location>
        <position position="321"/>
    </location>
    <ligand>
        <name>muraymycin D2</name>
        <dbReference type="ChEBI" id="CHEBI:178053"/>
        <note>inhibitor</note>
    </ligand>
</feature>
<feature type="mutagenesis site" description="Reduces binding to inhibitor." evidence="3">
    <original>K</original>
    <variation>A</variation>
    <location>
        <position position="70"/>
    </location>
</feature>
<feature type="mutagenesis site" description="Loss of catalytic activity." evidence="2">
    <original>D</original>
    <variation>A</variation>
    <location>
        <position position="117"/>
    </location>
</feature>
<feature type="mutagenesis site" description="Loss of catalytic activity." evidence="2">
    <original>D</original>
    <variation>A</variation>
    <location>
        <position position="118"/>
    </location>
</feature>
<feature type="mutagenesis site" description="Loss of catalytic activity." evidence="3">
    <original>N</original>
    <variation>A</variation>
    <location>
        <position position="190"/>
    </location>
</feature>
<feature type="mutagenesis site" description="Loss of catalytic activity." evidence="3">
    <original>D</original>
    <variation>A</variation>
    <location>
        <position position="193"/>
    </location>
</feature>
<feature type="mutagenesis site" description="Loss of catalytic activity." evidence="3">
    <original>D</original>
    <variation>A</variation>
    <location>
        <position position="196"/>
    </location>
</feature>
<feature type="mutagenesis site" description="Loss of catalytic activity." evidence="3">
    <original>D</original>
    <variation>N</variation>
    <location>
        <position position="196"/>
    </location>
</feature>
<feature type="mutagenesis site" description="Impairs binding to inhibitor." evidence="3">
    <original>F</original>
    <variation>A</variation>
    <location>
        <position position="262"/>
    </location>
</feature>
<feature type="mutagenesis site" description="Reduces binding to inhibitor." evidence="3">
    <original>F</original>
    <variation>W</variation>
    <location>
        <position position="262"/>
    </location>
</feature>
<feature type="mutagenesis site" description="Loss of catalytic activity. Reduces binding to inhibitor." evidence="2 4">
    <original>D</original>
    <variation>A</variation>
    <location>
        <position position="265"/>
    </location>
</feature>
<feature type="mutagenesis site" description="Impairs binding to inhibitor." evidence="3">
    <original>Q</original>
    <variation>A</variation>
    <location>
        <position position="305"/>
    </location>
</feature>
<feature type="mutagenesis site" description="Loss of catalytic activity." evidence="2">
    <original>H</original>
    <variation>A</variation>
    <location>
        <position position="324"/>
    </location>
</feature>
<feature type="mutagenesis site" description="Reduces the catalytic activity." evidence="2">
    <original>H</original>
    <variation>A</variation>
    <location>
        <position position="325"/>
    </location>
</feature>
<feature type="mutagenesis site" description="Reduces the catalytic activity." evidence="2">
    <original>H</original>
    <variation>A</variation>
    <location>
        <position position="326"/>
    </location>
</feature>
<feature type="helix" evidence="7">
    <location>
        <begin position="21"/>
        <end position="56"/>
    </location>
</feature>
<feature type="strand" evidence="7">
    <location>
        <begin position="71"/>
        <end position="73"/>
    </location>
</feature>
<feature type="helix" evidence="7">
    <location>
        <begin position="78"/>
        <end position="92"/>
    </location>
</feature>
<feature type="turn" evidence="7">
    <location>
        <begin position="95"/>
        <end position="97"/>
    </location>
</feature>
<feature type="helix" evidence="7">
    <location>
        <begin position="99"/>
        <end position="124"/>
    </location>
</feature>
<feature type="helix" evidence="7">
    <location>
        <begin position="130"/>
        <end position="149"/>
    </location>
</feature>
<feature type="strand" evidence="7">
    <location>
        <begin position="157"/>
        <end position="159"/>
    </location>
</feature>
<feature type="strand" evidence="7">
    <location>
        <begin position="167"/>
        <end position="169"/>
    </location>
</feature>
<feature type="helix" evidence="7">
    <location>
        <begin position="171"/>
        <end position="173"/>
    </location>
</feature>
<feature type="helix" evidence="7">
    <location>
        <begin position="174"/>
        <end position="192"/>
    </location>
</feature>
<feature type="turn" evidence="8">
    <location>
        <begin position="196"/>
        <end position="199"/>
    </location>
</feature>
<feature type="helix" evidence="7">
    <location>
        <begin position="200"/>
        <end position="216"/>
    </location>
</feature>
<feature type="helix" evidence="7">
    <location>
        <begin position="220"/>
        <end position="225"/>
    </location>
</feature>
<feature type="turn" evidence="8">
    <location>
        <begin position="232"/>
        <end position="234"/>
    </location>
</feature>
<feature type="helix" evidence="7">
    <location>
        <begin position="235"/>
        <end position="255"/>
    </location>
</feature>
<feature type="strand" evidence="7">
    <location>
        <begin position="256"/>
        <end position="258"/>
    </location>
</feature>
<feature type="helix" evidence="7">
    <location>
        <begin position="264"/>
        <end position="281"/>
    </location>
</feature>
<feature type="helix" evidence="7">
    <location>
        <begin position="285"/>
        <end position="291"/>
    </location>
</feature>
<feature type="helix" evidence="7">
    <location>
        <begin position="293"/>
        <end position="312"/>
    </location>
</feature>
<feature type="strand" evidence="7">
    <location>
        <begin position="317"/>
        <end position="322"/>
    </location>
</feature>
<feature type="helix" evidence="7">
    <location>
        <begin position="323"/>
        <end position="329"/>
    </location>
</feature>
<feature type="helix" evidence="7">
    <location>
        <begin position="334"/>
        <end position="356"/>
    </location>
</feature>
<comment type="function">
    <text evidence="1 2 3 4">Catalyzes the initial step of the lipid cycle reactions in the biosynthesis of the cell wall peptidoglycan: transfers peptidoglycan precursor phospho-MurNAc-pentapeptide from UDP-MurNAc-pentapeptide onto the lipid carrier undecaprenyl phosphate, yielding undecaprenyl-pyrophosphoryl-MurNAc-pentapeptide, known as lipid I.</text>
</comment>
<comment type="catalytic activity">
    <reaction evidence="1 2 3 4">
        <text>UDP-N-acetyl-alpha-D-muramoyl-L-alanyl-gamma-D-glutamyl-meso-2,6-diaminopimeloyl-D-alanyl-D-alanine + di-trans,octa-cis-undecaprenyl phosphate = di-trans,octa-cis-undecaprenyl diphospho-N-acetyl-alpha-D-muramoyl-L-alanyl-D-glutamyl-meso-2,6-diaminopimeloyl-D-alanyl-D-alanine + UMP</text>
        <dbReference type="Rhea" id="RHEA:28386"/>
        <dbReference type="ChEBI" id="CHEBI:57865"/>
        <dbReference type="ChEBI" id="CHEBI:60392"/>
        <dbReference type="ChEBI" id="CHEBI:61386"/>
        <dbReference type="ChEBI" id="CHEBI:61387"/>
        <dbReference type="EC" id="2.7.8.13"/>
    </reaction>
</comment>
<comment type="cofactor">
    <cofactor evidence="1 2 3 4">
        <name>Mg(2+)</name>
        <dbReference type="ChEBI" id="CHEBI:18420"/>
    </cofactor>
    <cofactor evidence="2">
        <name>Mn(2+)</name>
        <dbReference type="ChEBI" id="CHEBI:29035"/>
    </cofactor>
</comment>
<comment type="activity regulation">
    <text evidence="2 3 4">Inhibited by natural nucleoside antibiotics including tunicamycin, capuramycin and muraymycin. Usually the cofactor magnesium is not required for antibiotic binding.</text>
</comment>
<comment type="biophysicochemical properties">
    <kinetics>
        <KM evidence="3">190 uM for UDP-MurNAc-pentapeptide</KM>
    </kinetics>
</comment>
<comment type="pathway">
    <text evidence="1">Cell wall biogenesis; peptidoglycan biosynthesis.</text>
</comment>
<comment type="subunit">
    <text evidence="2">Homodimer.</text>
</comment>
<comment type="interaction">
    <interactant intactId="EBI-16071899">
        <id>O66465</id>
    </interactant>
    <interactant intactId="EBI-16071899">
        <id>O66465</id>
        <label>mraY</label>
    </interactant>
    <organismsDiffer>false</organismsDiffer>
    <experiments>5</experiments>
</comment>
<comment type="subcellular location">
    <subcellularLocation>
        <location evidence="1">Cell inner membrane</location>
        <topology evidence="1">Multi-pass membrane protein</topology>
    </subcellularLocation>
</comment>
<comment type="similarity">
    <text evidence="1">Belongs to the glycosyltransferase 4 family. MraY subfamily.</text>
</comment>
<evidence type="ECO:0000255" key="1">
    <source>
        <dbReference type="HAMAP-Rule" id="MF_00038"/>
    </source>
</evidence>
<evidence type="ECO:0000269" key="2">
    <source>
    </source>
</evidence>
<evidence type="ECO:0000269" key="3">
    <source>
    </source>
</evidence>
<evidence type="ECO:0000269" key="4">
    <source>
    </source>
</evidence>
<evidence type="ECO:0007744" key="5">
    <source>
        <dbReference type="PDB" id="4J72"/>
    </source>
</evidence>
<evidence type="ECO:0007744" key="6">
    <source>
        <dbReference type="PDB" id="5CKR"/>
    </source>
</evidence>
<evidence type="ECO:0007829" key="7">
    <source>
        <dbReference type="PDB" id="5CKR"/>
    </source>
</evidence>
<evidence type="ECO:0007829" key="8">
    <source>
        <dbReference type="PDB" id="6OYH"/>
    </source>
</evidence>
<dbReference type="EC" id="2.7.8.13" evidence="1 2 3 4"/>
<dbReference type="EMBL" id="AE000657">
    <property type="protein sequence ID" value="AAC06418.1"/>
    <property type="molecule type" value="Genomic_DNA"/>
</dbReference>
<dbReference type="PIR" id="F70304">
    <property type="entry name" value="F70304"/>
</dbReference>
<dbReference type="RefSeq" id="NP_213025.1">
    <property type="nucleotide sequence ID" value="NC_000918.1"/>
</dbReference>
<dbReference type="RefSeq" id="WP_010879963.1">
    <property type="nucleotide sequence ID" value="NC_000918.1"/>
</dbReference>
<dbReference type="PDB" id="4J72">
    <property type="method" value="X-ray"/>
    <property type="resolution" value="3.30 A"/>
    <property type="chains" value="A/B=1-359"/>
</dbReference>
<dbReference type="PDB" id="5CKR">
    <property type="method" value="X-ray"/>
    <property type="resolution" value="2.95 A"/>
    <property type="chains" value="A=1-359"/>
</dbReference>
<dbReference type="PDB" id="6OYH">
    <property type="method" value="X-ray"/>
    <property type="resolution" value="2.95 A"/>
    <property type="chains" value="A/B/C/D=1-359"/>
</dbReference>
<dbReference type="PDB" id="6OYZ">
    <property type="method" value="X-ray"/>
    <property type="resolution" value="3.62 A"/>
    <property type="chains" value="A/B/C/D=1-359"/>
</dbReference>
<dbReference type="PDB" id="6OZ6">
    <property type="method" value="X-ray"/>
    <property type="resolution" value="3.70 A"/>
    <property type="chains" value="A/B/C/D=1-359"/>
</dbReference>
<dbReference type="PDB" id="8CXR">
    <property type="method" value="X-ray"/>
    <property type="resolution" value="3.65 A"/>
    <property type="chains" value="A/B/C/D=1-359"/>
</dbReference>
<dbReference type="PDB" id="9B70">
    <property type="method" value="EM"/>
    <property type="resolution" value="2.88 A"/>
    <property type="chains" value="A/B=1-359"/>
</dbReference>
<dbReference type="PDB" id="9B71">
    <property type="method" value="EM"/>
    <property type="resolution" value="2.70 A"/>
    <property type="chains" value="A/B=1-359"/>
</dbReference>
<dbReference type="PDBsum" id="4J72"/>
<dbReference type="PDBsum" id="5CKR"/>
<dbReference type="PDBsum" id="6OYH"/>
<dbReference type="PDBsum" id="6OYZ"/>
<dbReference type="PDBsum" id="6OZ6"/>
<dbReference type="PDBsum" id="8CXR"/>
<dbReference type="PDBsum" id="9B70"/>
<dbReference type="PDBsum" id="9B71"/>
<dbReference type="EMDB" id="EMD-44293"/>
<dbReference type="EMDB" id="EMD-44294"/>
<dbReference type="SMR" id="O66465"/>
<dbReference type="DIP" id="DIP-61734N"/>
<dbReference type="FunCoup" id="O66465">
    <property type="interactions" value="320"/>
</dbReference>
<dbReference type="STRING" id="224324.aq_053"/>
<dbReference type="BindingDB" id="O66465"/>
<dbReference type="ChEMBL" id="CHEMBL4295560"/>
<dbReference type="ABCD" id="O66465">
    <property type="antibodies" value="1 sequenced antibody"/>
</dbReference>
<dbReference type="EnsemblBacteria" id="AAC06418">
    <property type="protein sequence ID" value="AAC06418"/>
    <property type="gene ID" value="aq_053"/>
</dbReference>
<dbReference type="KEGG" id="aae:aq_053"/>
<dbReference type="PATRIC" id="fig|224324.8.peg.41"/>
<dbReference type="eggNOG" id="COG0472">
    <property type="taxonomic scope" value="Bacteria"/>
</dbReference>
<dbReference type="HOGENOM" id="CLU_023982_0_0_0"/>
<dbReference type="InParanoid" id="O66465"/>
<dbReference type="OrthoDB" id="9805475at2"/>
<dbReference type="BRENDA" id="2.7.8.13">
    <property type="organism ID" value="396"/>
</dbReference>
<dbReference type="UniPathway" id="UPA00219"/>
<dbReference type="EvolutionaryTrace" id="O66465"/>
<dbReference type="Proteomes" id="UP000000798">
    <property type="component" value="Chromosome"/>
</dbReference>
<dbReference type="GO" id="GO:0005886">
    <property type="term" value="C:plasma membrane"/>
    <property type="evidence" value="ECO:0000318"/>
    <property type="project" value="GO_Central"/>
</dbReference>
<dbReference type="GO" id="GO:0042802">
    <property type="term" value="F:identical protein binding"/>
    <property type="evidence" value="ECO:0000353"/>
    <property type="project" value="IntAct"/>
</dbReference>
<dbReference type="GO" id="GO:0046872">
    <property type="term" value="F:metal ion binding"/>
    <property type="evidence" value="ECO:0007669"/>
    <property type="project" value="UniProtKB-KW"/>
</dbReference>
<dbReference type="GO" id="GO:0008963">
    <property type="term" value="F:phospho-N-acetylmuramoyl-pentapeptide-transferase activity"/>
    <property type="evidence" value="ECO:0000314"/>
    <property type="project" value="UniProtKB"/>
</dbReference>
<dbReference type="GO" id="GO:0016780">
    <property type="term" value="F:phosphotransferase activity, for other substituted phosphate groups"/>
    <property type="evidence" value="ECO:0000318"/>
    <property type="project" value="GO_Central"/>
</dbReference>
<dbReference type="GO" id="GO:0051992">
    <property type="term" value="F:UDP-N-acetylmuramoyl-L-alanyl-D-glutamyl-meso-2,6-diaminopimelyl-D-alanyl-D-alanine:undecaprenyl-phosphate transferase activity"/>
    <property type="evidence" value="ECO:0007669"/>
    <property type="project" value="RHEA"/>
</dbReference>
<dbReference type="GO" id="GO:0051301">
    <property type="term" value="P:cell division"/>
    <property type="evidence" value="ECO:0007669"/>
    <property type="project" value="UniProtKB-KW"/>
</dbReference>
<dbReference type="GO" id="GO:0044038">
    <property type="term" value="P:cell wall macromolecule biosynthetic process"/>
    <property type="evidence" value="ECO:0000318"/>
    <property type="project" value="GO_Central"/>
</dbReference>
<dbReference type="GO" id="GO:0071555">
    <property type="term" value="P:cell wall organization"/>
    <property type="evidence" value="ECO:0000318"/>
    <property type="project" value="GO_Central"/>
</dbReference>
<dbReference type="GO" id="GO:0009252">
    <property type="term" value="P:peptidoglycan biosynthetic process"/>
    <property type="evidence" value="ECO:0007669"/>
    <property type="project" value="UniProtKB-UniRule"/>
</dbReference>
<dbReference type="GO" id="GO:0008360">
    <property type="term" value="P:regulation of cell shape"/>
    <property type="evidence" value="ECO:0007669"/>
    <property type="project" value="UniProtKB-KW"/>
</dbReference>
<dbReference type="CDD" id="cd06852">
    <property type="entry name" value="GT_MraY"/>
    <property type="match status" value="1"/>
</dbReference>
<dbReference type="HAMAP" id="MF_00038">
    <property type="entry name" value="MraY"/>
    <property type="match status" value="1"/>
</dbReference>
<dbReference type="InterPro" id="IPR000715">
    <property type="entry name" value="Glycosyl_transferase_4"/>
</dbReference>
<dbReference type="InterPro" id="IPR003524">
    <property type="entry name" value="PNAcMuramoyl-5peptid_Trfase"/>
</dbReference>
<dbReference type="InterPro" id="IPR018480">
    <property type="entry name" value="PNAcMuramoyl-5peptid_Trfase_CS"/>
</dbReference>
<dbReference type="NCBIfam" id="TIGR00445">
    <property type="entry name" value="mraY"/>
    <property type="match status" value="1"/>
</dbReference>
<dbReference type="PANTHER" id="PTHR22926">
    <property type="entry name" value="PHOSPHO-N-ACETYLMURAMOYL-PENTAPEPTIDE-TRANSFERASE"/>
    <property type="match status" value="1"/>
</dbReference>
<dbReference type="PANTHER" id="PTHR22926:SF5">
    <property type="entry name" value="PHOSPHO-N-ACETYLMURAMOYL-PENTAPEPTIDE-TRANSFERASE HOMOLOG"/>
    <property type="match status" value="1"/>
</dbReference>
<dbReference type="Pfam" id="PF00953">
    <property type="entry name" value="Glycos_transf_4"/>
    <property type="match status" value="1"/>
</dbReference>
<dbReference type="Pfam" id="PF10555">
    <property type="entry name" value="MraY_sig1"/>
    <property type="match status" value="1"/>
</dbReference>
<dbReference type="PROSITE" id="PS01347">
    <property type="entry name" value="MRAY_1"/>
    <property type="match status" value="1"/>
</dbReference>
<dbReference type="PROSITE" id="PS01348">
    <property type="entry name" value="MRAY_2"/>
    <property type="match status" value="1"/>
</dbReference>
<name>MRAY_AQUAE</name>
<accession>O66465</accession>
<sequence length="359" mass="40341">MLYQLALLLKDYWFAFNVLKYITFRSFTAVLIAFFLTLVLSPSFINRLRKIQRLFGGYVREYTPESHEVKKYTPTMGGIVILIVVTLSTLLLMRWDIKYTWVVLLSFLSFGTIGFWDDYVKLKNKKGISIKTKFLLQVLSASLISVLIYYWADIDTILYFPFFKELYVDLGVLYLPFAVFVIVGSANAVNLTDGLDGLAIGPAMTTATALGVVAYAVGHSKIAQYLNIPYVPYAGELTVFCFALVGAGLGFLWFNSFPAQMFMGDVGSLSIGASLATVALLTKSEFIFAVAAGVFVFETISVILQIIYFRWTGGKRLFKRAPFHHHLELNGLPEPKIVVRMWIISILLAIIAISMLKLR</sequence>
<proteinExistence type="evidence at protein level"/>